<protein>
    <recommendedName>
        <fullName>Septation initiation protein sid4</fullName>
    </recommendedName>
</protein>
<proteinExistence type="evidence at protein level"/>
<dbReference type="EMBL" id="AF153475">
    <property type="protein sequence ID" value="AAF69105.1"/>
    <property type="molecule type" value="Genomic_DNA"/>
</dbReference>
<dbReference type="EMBL" id="CU329671">
    <property type="protein sequence ID" value="CAA19316.1"/>
    <property type="molecule type" value="Genomic_DNA"/>
</dbReference>
<dbReference type="PIR" id="T39964">
    <property type="entry name" value="T39964"/>
</dbReference>
<dbReference type="RefSeq" id="NP_596814.1">
    <property type="nucleotide sequence ID" value="NM_001023834.2"/>
</dbReference>
<dbReference type="BioGRID" id="277175">
    <property type="interactions" value="30"/>
</dbReference>
<dbReference type="FunCoup" id="O60187">
    <property type="interactions" value="2"/>
</dbReference>
<dbReference type="IntAct" id="O60187">
    <property type="interactions" value="4"/>
</dbReference>
<dbReference type="MINT" id="O60187"/>
<dbReference type="STRING" id="284812.O60187"/>
<dbReference type="iPTMnet" id="O60187"/>
<dbReference type="SwissPalm" id="O60187"/>
<dbReference type="PaxDb" id="4896-SPBC244.01c.1"/>
<dbReference type="EnsemblFungi" id="SPBC244.01c.1">
    <property type="protein sequence ID" value="SPBC244.01c.1:pep"/>
    <property type="gene ID" value="SPBC244.01c"/>
</dbReference>
<dbReference type="GeneID" id="2540650"/>
<dbReference type="KEGG" id="spo:2540650"/>
<dbReference type="PomBase" id="SPBC244.01c">
    <property type="gene designation" value="sid4"/>
</dbReference>
<dbReference type="VEuPathDB" id="FungiDB:SPBC244.01c"/>
<dbReference type="eggNOG" id="ENOG502SVAG">
    <property type="taxonomic scope" value="Eukaryota"/>
</dbReference>
<dbReference type="HOGENOM" id="CLU_415702_0_0_1"/>
<dbReference type="InParanoid" id="O60187"/>
<dbReference type="OMA" id="LVSKQCL"/>
<dbReference type="PhylomeDB" id="O60187"/>
<dbReference type="CD-CODE" id="576F0A76">
    <property type="entry name" value="Centrosome"/>
</dbReference>
<dbReference type="PRO" id="PR:O60187"/>
<dbReference type="Proteomes" id="UP000002485">
    <property type="component" value="Chromosome II"/>
</dbReference>
<dbReference type="GO" id="GO:0005737">
    <property type="term" value="C:cytoplasm"/>
    <property type="evidence" value="ECO:0007669"/>
    <property type="project" value="UniProtKB-KW"/>
</dbReference>
<dbReference type="GO" id="GO:0090619">
    <property type="term" value="C:meiotic spindle pole"/>
    <property type="evidence" value="ECO:0000269"/>
    <property type="project" value="PomBase"/>
</dbReference>
<dbReference type="GO" id="GO:0044732">
    <property type="term" value="C:mitotic spindle pole body"/>
    <property type="evidence" value="ECO:0000314"/>
    <property type="project" value="PomBase"/>
</dbReference>
<dbReference type="GO" id="GO:0061499">
    <property type="term" value="C:outer plaque of mitotic spindle pole body"/>
    <property type="evidence" value="ECO:0000314"/>
    <property type="project" value="PomBase"/>
</dbReference>
<dbReference type="GO" id="GO:0035591">
    <property type="term" value="F:signaling adaptor activity"/>
    <property type="evidence" value="ECO:0000353"/>
    <property type="project" value="PomBase"/>
</dbReference>
<dbReference type="GO" id="GO:0051301">
    <property type="term" value="P:cell division"/>
    <property type="evidence" value="ECO:0007669"/>
    <property type="project" value="UniProtKB-KW"/>
</dbReference>
<dbReference type="GO" id="GO:0032466">
    <property type="term" value="P:negative regulation of cytokinesis"/>
    <property type="evidence" value="ECO:0000269"/>
    <property type="project" value="PomBase"/>
</dbReference>
<dbReference type="GO" id="GO:0031030">
    <property type="term" value="P:negative regulation of septation initiation signaling"/>
    <property type="evidence" value="ECO:0000269"/>
    <property type="project" value="PomBase"/>
</dbReference>
<dbReference type="GO" id="GO:0031028">
    <property type="term" value="P:septation initiation signaling"/>
    <property type="evidence" value="ECO:0000315"/>
    <property type="project" value="PomBase"/>
</dbReference>
<dbReference type="InterPro" id="IPR021750">
    <property type="entry name" value="Sid4-like"/>
</dbReference>
<dbReference type="Pfam" id="PF11778">
    <property type="entry name" value="SID"/>
    <property type="match status" value="1"/>
</dbReference>
<name>SID4_SCHPO</name>
<evidence type="ECO:0000256" key="1">
    <source>
        <dbReference type="SAM" id="MobiDB-lite"/>
    </source>
</evidence>
<evidence type="ECO:0000269" key="2">
    <source>
    </source>
</evidence>
<evidence type="ECO:0000269" key="3">
    <source>
    </source>
</evidence>
<evidence type="ECO:0000269" key="4">
    <source>
    </source>
</evidence>
<evidence type="ECO:0000269" key="5">
    <source>
    </source>
</evidence>
<evidence type="ECO:0000269" key="6">
    <source>
    </source>
</evidence>
<sequence>MDEAFGDSLSTDYRWLGHSHFDSHPSAGDSIYFDSLDEDADPSRTARIDRIAELLDGLNDEQISELVNGVNSTTIKENTKKEISNPNDSTRLPLEQIPGSNNLFLDPRHQLGDNSQNAQRHHEPSFNSEKASYTSTPYKNVAPKVIDSPSARHMHSNSPSFPPSQSHTSSYDQSPKGQLRDNISVPNQQDGLDPEVFNQQSKETKKSLQVPPSRNVPPPVTRPNQYNPEPNFSLSSGYPQQHFSQPELQNRNVHLETVPESYPVPPSGYPLTSSTCVSSISQPIQSTDCQKAQENLSNNKQMSSNDQDIDPFKQAITDLPPSFVNIVLEMNATIQSLSNQCQQRDKQIENITKQLLMNQQDYCPTTMSTTVSTPLCPPKRFPKSTKDFKEQKPDTKQVRSATISNDFNLKGNGRYNEKSQIAVPSEIRVQLSTLDAILLQFEHLRKELTQARKEIQILRHTSQNGDQESNESSKNAITTKTTDKGNNKENTMLNDGSTAPAKNDIRNVINTNNLDAKLSDESELMIEKNKSYSTPASSTIPTFHTSQPLTSLNMPDSRFNLAKEKQLYYRLGLQHIDQQCSVETANMLKTVLVQLNIPFAIFPSTIGQVRRQLQQGRRLYQWARNIHYLIYEENMRDGLVSKQCLADMLKKIRELKKRSL</sequence>
<comment type="function">
    <text evidence="2 5">Required for activation of the spg1 GTPase signaling cascade which leads to the initiation of septation and the subsequent termination of mitosis. May act as a scaffold at the spindle pole body to which other components of the spg1 signaling cascade attach.</text>
</comment>
<comment type="subunit">
    <text evidence="2 3 4 5">Homodimer. Interacts with cdc11, sad1, plo1 and dma1.</text>
</comment>
<comment type="interaction">
    <interactant intactId="EBI-1125100">
        <id>O60187</id>
    </interactant>
    <interactant intactId="EBI-1125055">
        <id>Q10322</id>
        <label>dma1</label>
    </interactant>
    <organismsDiffer>false</organismsDiffer>
    <experiments>2</experiments>
</comment>
<comment type="subcellular location">
    <subcellularLocation>
        <location evidence="2 3 4 5 6">Cytoplasm</location>
        <location evidence="2 3 4 5 6">Cytoskeleton</location>
        <location evidence="2 3 4 5 6">Microtubule organizing center</location>
        <location evidence="2 3 4 5 6">Spindle pole body</location>
    </subcellularLocation>
</comment>
<accession>O60187</accession>
<feature type="chain" id="PRO_0000097755" description="Septation initiation protein sid4">
    <location>
        <begin position="1"/>
        <end position="660"/>
    </location>
</feature>
<feature type="region of interest" description="Disordered" evidence="1">
    <location>
        <begin position="79"/>
        <end position="243"/>
    </location>
</feature>
<feature type="region of interest" description="Disordered" evidence="1">
    <location>
        <begin position="368"/>
        <end position="396"/>
    </location>
</feature>
<feature type="region of interest" description="Disordered" evidence="1">
    <location>
        <begin position="459"/>
        <end position="503"/>
    </location>
</feature>
<feature type="compositionally biased region" description="Polar residues" evidence="1">
    <location>
        <begin position="125"/>
        <end position="138"/>
    </location>
</feature>
<feature type="compositionally biased region" description="Polar residues" evidence="1">
    <location>
        <begin position="156"/>
        <end position="176"/>
    </location>
</feature>
<feature type="compositionally biased region" description="Polar residues" evidence="1">
    <location>
        <begin position="222"/>
        <end position="243"/>
    </location>
</feature>
<feature type="compositionally biased region" description="Basic and acidic residues" evidence="1">
    <location>
        <begin position="384"/>
        <end position="396"/>
    </location>
</feature>
<feature type="compositionally biased region" description="Polar residues" evidence="1">
    <location>
        <begin position="459"/>
        <end position="480"/>
    </location>
</feature>
<feature type="compositionally biased region" description="Polar residues" evidence="1">
    <location>
        <begin position="488"/>
        <end position="497"/>
    </location>
</feature>
<keyword id="KW-0131">Cell cycle</keyword>
<keyword id="KW-0132">Cell division</keyword>
<keyword id="KW-0963">Cytoplasm</keyword>
<keyword id="KW-0206">Cytoskeleton</keyword>
<keyword id="KW-0498">Mitosis</keyword>
<keyword id="KW-1185">Reference proteome</keyword>
<reference key="1">
    <citation type="journal article" date="2000" name="Proc. Natl. Acad. Sci. U.S.A.">
        <title>Sid4p is required to localize components of the septation initiation pathway to the spindle pole body in fission yeast.</title>
        <authorList>
            <person name="Chang L."/>
            <person name="Gould K.L."/>
        </authorList>
    </citation>
    <scope>NUCLEOTIDE SEQUENCE [GENOMIC DNA]</scope>
    <scope>FUNCTION</scope>
    <scope>SUBUNIT</scope>
    <scope>SUBCELLULAR LOCATION</scope>
    <source>
        <strain>972 / ATCC 24843</strain>
    </source>
</reference>
<reference key="2">
    <citation type="journal article" date="2002" name="Nature">
        <title>The genome sequence of Schizosaccharomyces pombe.</title>
        <authorList>
            <person name="Wood V."/>
            <person name="Gwilliam R."/>
            <person name="Rajandream M.A."/>
            <person name="Lyne M.H."/>
            <person name="Lyne R."/>
            <person name="Stewart A."/>
            <person name="Sgouros J.G."/>
            <person name="Peat N."/>
            <person name="Hayles J."/>
            <person name="Baker S.G."/>
            <person name="Basham D."/>
            <person name="Bowman S."/>
            <person name="Brooks K."/>
            <person name="Brown D."/>
            <person name="Brown S."/>
            <person name="Chillingworth T."/>
            <person name="Churcher C.M."/>
            <person name="Collins M."/>
            <person name="Connor R."/>
            <person name="Cronin A."/>
            <person name="Davis P."/>
            <person name="Feltwell T."/>
            <person name="Fraser A."/>
            <person name="Gentles S."/>
            <person name="Goble A."/>
            <person name="Hamlin N."/>
            <person name="Harris D.E."/>
            <person name="Hidalgo J."/>
            <person name="Hodgson G."/>
            <person name="Holroyd S."/>
            <person name="Hornsby T."/>
            <person name="Howarth S."/>
            <person name="Huckle E.J."/>
            <person name="Hunt S."/>
            <person name="Jagels K."/>
            <person name="James K.D."/>
            <person name="Jones L."/>
            <person name="Jones M."/>
            <person name="Leather S."/>
            <person name="McDonald S."/>
            <person name="McLean J."/>
            <person name="Mooney P."/>
            <person name="Moule S."/>
            <person name="Mungall K.L."/>
            <person name="Murphy L.D."/>
            <person name="Niblett D."/>
            <person name="Odell C."/>
            <person name="Oliver K."/>
            <person name="O'Neil S."/>
            <person name="Pearson D."/>
            <person name="Quail M.A."/>
            <person name="Rabbinowitsch E."/>
            <person name="Rutherford K.M."/>
            <person name="Rutter S."/>
            <person name="Saunders D."/>
            <person name="Seeger K."/>
            <person name="Sharp S."/>
            <person name="Skelton J."/>
            <person name="Simmonds M.N."/>
            <person name="Squares R."/>
            <person name="Squares S."/>
            <person name="Stevens K."/>
            <person name="Taylor K."/>
            <person name="Taylor R.G."/>
            <person name="Tivey A."/>
            <person name="Walsh S.V."/>
            <person name="Warren T."/>
            <person name="Whitehead S."/>
            <person name="Woodward J.R."/>
            <person name="Volckaert G."/>
            <person name="Aert R."/>
            <person name="Robben J."/>
            <person name="Grymonprez B."/>
            <person name="Weltjens I."/>
            <person name="Vanstreels E."/>
            <person name="Rieger M."/>
            <person name="Schaefer M."/>
            <person name="Mueller-Auer S."/>
            <person name="Gabel C."/>
            <person name="Fuchs M."/>
            <person name="Duesterhoeft A."/>
            <person name="Fritzc C."/>
            <person name="Holzer E."/>
            <person name="Moestl D."/>
            <person name="Hilbert H."/>
            <person name="Borzym K."/>
            <person name="Langer I."/>
            <person name="Beck A."/>
            <person name="Lehrach H."/>
            <person name="Reinhardt R."/>
            <person name="Pohl T.M."/>
            <person name="Eger P."/>
            <person name="Zimmermann W."/>
            <person name="Wedler H."/>
            <person name="Wambutt R."/>
            <person name="Purnelle B."/>
            <person name="Goffeau A."/>
            <person name="Cadieu E."/>
            <person name="Dreano S."/>
            <person name="Gloux S."/>
            <person name="Lelaure V."/>
            <person name="Mottier S."/>
            <person name="Galibert F."/>
            <person name="Aves S.J."/>
            <person name="Xiang Z."/>
            <person name="Hunt C."/>
            <person name="Moore K."/>
            <person name="Hurst S.M."/>
            <person name="Lucas M."/>
            <person name="Rochet M."/>
            <person name="Gaillardin C."/>
            <person name="Tallada V.A."/>
            <person name="Garzon A."/>
            <person name="Thode G."/>
            <person name="Daga R.R."/>
            <person name="Cruzado L."/>
            <person name="Jimenez J."/>
            <person name="Sanchez M."/>
            <person name="del Rey F."/>
            <person name="Benito J."/>
            <person name="Dominguez A."/>
            <person name="Revuelta J.L."/>
            <person name="Moreno S."/>
            <person name="Armstrong J."/>
            <person name="Forsburg S.L."/>
            <person name="Cerutti L."/>
            <person name="Lowe T."/>
            <person name="McCombie W.R."/>
            <person name="Paulsen I."/>
            <person name="Potashkin J."/>
            <person name="Shpakovski G.V."/>
            <person name="Ussery D."/>
            <person name="Barrell B.G."/>
            <person name="Nurse P."/>
        </authorList>
    </citation>
    <scope>NUCLEOTIDE SEQUENCE [LARGE SCALE GENOMIC DNA]</scope>
    <source>
        <strain>972 / ATCC 24843</strain>
    </source>
</reference>
<reference key="3">
    <citation type="journal article" date="2001" name="Curr. Biol.">
        <title>S. pombe cdc11p, together with sid4p, provides an anchor for septation initiation network proteins on the spindle pole body.</title>
        <authorList>
            <person name="Krapp A."/>
            <person name="Schmidt S."/>
            <person name="Cano E."/>
            <person name="Simanis V."/>
        </authorList>
    </citation>
    <scope>INTERACTION WITH CDC11</scope>
    <scope>SUBCELLULAR LOCATION</scope>
</reference>
<reference key="4">
    <citation type="journal article" date="2004" name="Curr. Biol.">
        <title>Sid4p-Cdc11p assembles the septation initiation network and its regulators at the S. pombe SPB.</title>
        <authorList>
            <person name="Morrell J.L."/>
            <person name="Tomlin G.C."/>
            <person name="Rajagopalan S."/>
            <person name="Venkatram S."/>
            <person name="Feoktistova A.S."/>
            <person name="Tasto J.J."/>
            <person name="Mehta S."/>
            <person name="Jennings J.L."/>
            <person name="Link A."/>
            <person name="Balasubramanian M.K."/>
            <person name="Gould K.L."/>
        </authorList>
    </citation>
    <scope>FUNCTION</scope>
    <scope>INTERACTION WITH PLO1; CDC11 AND DMA1</scope>
    <scope>SUBCELLULAR LOCATION</scope>
</reference>
<reference key="5">
    <citation type="journal article" date="2004" name="Mol. Genet. Genomics">
        <title>Two-hybrid search for proteins that interact with Sad1 and Kms1, two membrane-bound components of the spindle pole body in fission yeast.</title>
        <authorList>
            <person name="Miki F."/>
            <person name="Kurabayashi A."/>
            <person name="Tange Y."/>
            <person name="Okazaki K."/>
            <person name="Shimanuki M."/>
            <person name="Niwa O."/>
        </authorList>
    </citation>
    <scope>INTERACTION WITH SAD1</scope>
    <scope>SUBCELLULAR LOCATION</scope>
</reference>
<reference key="6">
    <citation type="journal article" date="2006" name="Nat. Biotechnol.">
        <title>ORFeome cloning and global analysis of protein localization in the fission yeast Schizosaccharomyces pombe.</title>
        <authorList>
            <person name="Matsuyama A."/>
            <person name="Arai R."/>
            <person name="Yashiroda Y."/>
            <person name="Shirai A."/>
            <person name="Kamata A."/>
            <person name="Sekido S."/>
            <person name="Kobayashi Y."/>
            <person name="Hashimoto A."/>
            <person name="Hamamoto M."/>
            <person name="Hiraoka Y."/>
            <person name="Horinouchi S."/>
            <person name="Yoshida M."/>
        </authorList>
    </citation>
    <scope>SUBCELLULAR LOCATION [LARGE SCALE ANALYSIS]</scope>
</reference>
<gene>
    <name type="primary">sid4</name>
    <name type="ORF">SPBC244.01c</name>
</gene>
<organism>
    <name type="scientific">Schizosaccharomyces pombe (strain 972 / ATCC 24843)</name>
    <name type="common">Fission yeast</name>
    <dbReference type="NCBI Taxonomy" id="284812"/>
    <lineage>
        <taxon>Eukaryota</taxon>
        <taxon>Fungi</taxon>
        <taxon>Dikarya</taxon>
        <taxon>Ascomycota</taxon>
        <taxon>Taphrinomycotina</taxon>
        <taxon>Schizosaccharomycetes</taxon>
        <taxon>Schizosaccharomycetales</taxon>
        <taxon>Schizosaccharomycetaceae</taxon>
        <taxon>Schizosaccharomyces</taxon>
    </lineage>
</organism>